<organism>
    <name type="scientific">Oryza sativa subsp. japonica</name>
    <name type="common">Rice</name>
    <dbReference type="NCBI Taxonomy" id="39947"/>
    <lineage>
        <taxon>Eukaryota</taxon>
        <taxon>Viridiplantae</taxon>
        <taxon>Streptophyta</taxon>
        <taxon>Embryophyta</taxon>
        <taxon>Tracheophyta</taxon>
        <taxon>Spermatophyta</taxon>
        <taxon>Magnoliopsida</taxon>
        <taxon>Liliopsida</taxon>
        <taxon>Poales</taxon>
        <taxon>Poaceae</taxon>
        <taxon>BOP clade</taxon>
        <taxon>Oryzoideae</taxon>
        <taxon>Oryzeae</taxon>
        <taxon>Oryzinae</taxon>
        <taxon>Oryza</taxon>
        <taxon>Oryza sativa</taxon>
    </lineage>
</organism>
<feature type="transit peptide" description="Chloroplast" evidence="2">
    <location>
        <begin position="1"/>
        <end position="74"/>
    </location>
</feature>
<feature type="chain" id="PRO_0000247610" description="Probable N-acetyl-gamma-glutamyl-phosphate reductase, chloroplastic">
    <location>
        <begin position="75"/>
        <end position="415"/>
    </location>
</feature>
<feature type="region of interest" description="Disordered" evidence="3">
    <location>
        <begin position="48"/>
        <end position="68"/>
    </location>
</feature>
<feature type="compositionally biased region" description="Polar residues" evidence="3">
    <location>
        <begin position="56"/>
        <end position="67"/>
    </location>
</feature>
<feature type="active site" evidence="1">
    <location>
        <position position="219"/>
    </location>
</feature>
<feature type="strand" evidence="6">
    <location>
        <begin position="73"/>
        <end position="79"/>
    </location>
</feature>
<feature type="helix" evidence="6">
    <location>
        <begin position="83"/>
        <end position="92"/>
    </location>
</feature>
<feature type="strand" evidence="6">
    <location>
        <begin position="96"/>
        <end position="104"/>
    </location>
</feature>
<feature type="turn" evidence="6">
    <location>
        <begin position="107"/>
        <end position="110"/>
    </location>
</feature>
<feature type="helix" evidence="6">
    <location>
        <begin position="113"/>
        <end position="116"/>
    </location>
</feature>
<feature type="helix" evidence="6">
    <location>
        <begin position="118"/>
        <end position="120"/>
    </location>
</feature>
<feature type="helix" evidence="6">
    <location>
        <begin position="131"/>
        <end position="133"/>
    </location>
</feature>
<feature type="helix" evidence="6">
    <location>
        <begin position="136"/>
        <end position="138"/>
    </location>
</feature>
<feature type="strand" evidence="6">
    <location>
        <begin position="140"/>
        <end position="144"/>
    </location>
</feature>
<feature type="strand" evidence="6">
    <location>
        <begin position="147"/>
        <end position="149"/>
    </location>
</feature>
<feature type="helix" evidence="6">
    <location>
        <begin position="150"/>
        <end position="156"/>
    </location>
</feature>
<feature type="strand" evidence="6">
    <location>
        <begin position="163"/>
        <end position="166"/>
    </location>
</feature>
<feature type="turn" evidence="6">
    <location>
        <begin position="170"/>
        <end position="172"/>
    </location>
</feature>
<feature type="helix" evidence="6">
    <location>
        <begin position="176"/>
        <end position="183"/>
    </location>
</feature>
<feature type="helix" evidence="6">
    <location>
        <begin position="190"/>
        <end position="193"/>
    </location>
</feature>
<feature type="helix" evidence="6">
    <location>
        <begin position="201"/>
        <end position="210"/>
    </location>
</feature>
<feature type="strand" evidence="6">
    <location>
        <begin position="212"/>
        <end position="215"/>
    </location>
</feature>
<feature type="helix" evidence="6">
    <location>
        <begin position="219"/>
        <end position="233"/>
    </location>
</feature>
<feature type="strand" evidence="6">
    <location>
        <begin position="239"/>
        <end position="241"/>
    </location>
</feature>
<feature type="strand" evidence="6">
    <location>
        <begin position="243"/>
        <end position="249"/>
    </location>
</feature>
<feature type="helix" evidence="6">
    <location>
        <begin position="250"/>
        <end position="253"/>
    </location>
</feature>
<feature type="helix" evidence="6">
    <location>
        <begin position="259"/>
        <end position="261"/>
    </location>
</feature>
<feature type="helix" evidence="6">
    <location>
        <begin position="263"/>
        <end position="266"/>
    </location>
</feature>
<feature type="helix" evidence="6">
    <location>
        <begin position="280"/>
        <end position="292"/>
    </location>
</feature>
<feature type="strand" evidence="6">
    <location>
        <begin position="299"/>
        <end position="309"/>
    </location>
</feature>
<feature type="strand" evidence="6">
    <location>
        <begin position="311"/>
        <end position="319"/>
    </location>
</feature>
<feature type="helix" evidence="6">
    <location>
        <begin position="325"/>
        <end position="336"/>
    </location>
</feature>
<feature type="strand" evidence="6">
    <location>
        <begin position="342"/>
        <end position="344"/>
    </location>
</feature>
<feature type="helix" evidence="6">
    <location>
        <begin position="353"/>
        <end position="355"/>
    </location>
</feature>
<feature type="turn" evidence="6">
    <location>
        <begin position="356"/>
        <end position="358"/>
    </location>
</feature>
<feature type="strand" evidence="6">
    <location>
        <begin position="362"/>
        <end position="368"/>
    </location>
</feature>
<feature type="strand" evidence="6">
    <location>
        <begin position="374"/>
        <end position="381"/>
    </location>
</feature>
<feature type="turn" evidence="6">
    <location>
        <begin position="383"/>
        <end position="388"/>
    </location>
</feature>
<feature type="helix" evidence="6">
    <location>
        <begin position="389"/>
        <end position="400"/>
    </location>
</feature>
<feature type="turn" evidence="6">
    <location>
        <begin position="404"/>
        <end position="407"/>
    </location>
</feature>
<name>ARGC_ORYSJ</name>
<evidence type="ECO:0000250" key="1"/>
<evidence type="ECO:0000255" key="2"/>
<evidence type="ECO:0000256" key="3">
    <source>
        <dbReference type="SAM" id="MobiDB-lite"/>
    </source>
</evidence>
<evidence type="ECO:0000269" key="4">
    <source>
    </source>
</evidence>
<evidence type="ECO:0000305" key="5"/>
<evidence type="ECO:0007829" key="6">
    <source>
        <dbReference type="PDB" id="2CVO"/>
    </source>
</evidence>
<proteinExistence type="evidence at protein level"/>
<comment type="catalytic activity">
    <reaction>
        <text>N-acetyl-L-glutamate 5-semialdehyde + phosphate + NADP(+) = N-acetyl-L-glutamyl 5-phosphate + NADPH + H(+)</text>
        <dbReference type="Rhea" id="RHEA:21588"/>
        <dbReference type="ChEBI" id="CHEBI:15378"/>
        <dbReference type="ChEBI" id="CHEBI:29123"/>
        <dbReference type="ChEBI" id="CHEBI:43474"/>
        <dbReference type="ChEBI" id="CHEBI:57783"/>
        <dbReference type="ChEBI" id="CHEBI:57936"/>
        <dbReference type="ChEBI" id="CHEBI:58349"/>
        <dbReference type="EC" id="1.2.1.38"/>
    </reaction>
</comment>
<comment type="pathway">
    <text>Amino-acid biosynthesis; L-arginine biosynthesis; N(2)-acetyl-L-ornithine from L-glutamate: step 3/4.</text>
</comment>
<comment type="subunit">
    <text evidence="4">Homotetramer.</text>
</comment>
<comment type="subcellular location">
    <subcellularLocation>
        <location evidence="5">Plastid</location>
        <location evidence="5">Chloroplast</location>
    </subcellularLocation>
</comment>
<comment type="similarity">
    <text evidence="5">Belongs to the NAGSA dehydrogenase family. Type 1 subfamily.</text>
</comment>
<keyword id="KW-0002">3D-structure</keyword>
<keyword id="KW-0028">Amino-acid biosynthesis</keyword>
<keyword id="KW-0055">Arginine biosynthesis</keyword>
<keyword id="KW-0150">Chloroplast</keyword>
<keyword id="KW-0521">NADP</keyword>
<keyword id="KW-0560">Oxidoreductase</keyword>
<keyword id="KW-0934">Plastid</keyword>
<keyword id="KW-1185">Reference proteome</keyword>
<keyword id="KW-0809">Transit peptide</keyword>
<gene>
    <name type="ordered locus">Os03g0617900</name>
    <name type="ordered locus">LOC_Os03g42110</name>
    <name type="ORF">OSJNBa0063J18.8</name>
</gene>
<dbReference type="EC" id="1.2.1.38"/>
<dbReference type="EMBL" id="AC107206">
    <property type="protein sequence ID" value="AAT77050.1"/>
    <property type="molecule type" value="Genomic_DNA"/>
</dbReference>
<dbReference type="EMBL" id="DP000009">
    <property type="protein sequence ID" value="ABF97646.1"/>
    <property type="molecule type" value="Genomic_DNA"/>
</dbReference>
<dbReference type="EMBL" id="AP008209">
    <property type="protein sequence ID" value="BAF12582.1"/>
    <property type="molecule type" value="Genomic_DNA"/>
</dbReference>
<dbReference type="EMBL" id="AP014959">
    <property type="protein sequence ID" value="BAS85284.1"/>
    <property type="molecule type" value="Genomic_DNA"/>
</dbReference>
<dbReference type="EMBL" id="AK071544">
    <property type="protein sequence ID" value="BAG92548.1"/>
    <property type="molecule type" value="mRNA"/>
</dbReference>
<dbReference type="RefSeq" id="XP_015632676.1">
    <property type="nucleotide sequence ID" value="XM_015777190.1"/>
</dbReference>
<dbReference type="PDB" id="2CVO">
    <property type="method" value="X-ray"/>
    <property type="resolution" value="2.20 A"/>
    <property type="chains" value="A/B/C/D=50-415"/>
</dbReference>
<dbReference type="PDBsum" id="2CVO"/>
<dbReference type="SMR" id="Q6AV34"/>
<dbReference type="BioGRID" id="802495">
    <property type="interactions" value="1"/>
</dbReference>
<dbReference type="FunCoup" id="Q6AV34">
    <property type="interactions" value="202"/>
</dbReference>
<dbReference type="STRING" id="39947.Q6AV34"/>
<dbReference type="PaxDb" id="39947-Q6AV34"/>
<dbReference type="EnsemblPlants" id="Os03t0617900-01">
    <property type="protein sequence ID" value="Os03t0617900-01"/>
    <property type="gene ID" value="Os03g0617900"/>
</dbReference>
<dbReference type="Gramene" id="Os03t0617900-01">
    <property type="protein sequence ID" value="Os03t0617900-01"/>
    <property type="gene ID" value="Os03g0617900"/>
</dbReference>
<dbReference type="KEGG" id="dosa:Os03g0617900"/>
<dbReference type="eggNOG" id="KOG4354">
    <property type="taxonomic scope" value="Eukaryota"/>
</dbReference>
<dbReference type="HOGENOM" id="CLU_006384_2_1_1"/>
<dbReference type="InParanoid" id="Q6AV34"/>
<dbReference type="OMA" id="VQFEWPE"/>
<dbReference type="OrthoDB" id="438291at2759"/>
<dbReference type="PlantReactome" id="R-OSA-1119263">
    <property type="pathway name" value="Arginine biosynthesis"/>
</dbReference>
<dbReference type="PlantReactome" id="R-OSA-1119273">
    <property type="pathway name" value="Lysine biosynthesis I"/>
</dbReference>
<dbReference type="PlantReactome" id="R-OSA-1119283">
    <property type="pathway name" value="Lysine biosynthesis II"/>
</dbReference>
<dbReference type="PlantReactome" id="R-OSA-1119295">
    <property type="pathway name" value="Homoserine biosynthesis"/>
</dbReference>
<dbReference type="PlantReactome" id="R-OSA-1119539">
    <property type="pathway name" value="Ornithine biosynthesis"/>
</dbReference>
<dbReference type="PlantReactome" id="R-OSA-1119622">
    <property type="pathway name" value="Arginine biosynthesis II (acetyl cycle)"/>
</dbReference>
<dbReference type="UniPathway" id="UPA00068">
    <property type="reaction ID" value="UER00108"/>
</dbReference>
<dbReference type="EvolutionaryTrace" id="Q6AV34"/>
<dbReference type="Proteomes" id="UP000000763">
    <property type="component" value="Chromosome 3"/>
</dbReference>
<dbReference type="Proteomes" id="UP000059680">
    <property type="component" value="Chromosome 3"/>
</dbReference>
<dbReference type="GO" id="GO:0009507">
    <property type="term" value="C:chloroplast"/>
    <property type="evidence" value="ECO:0007669"/>
    <property type="project" value="UniProtKB-SubCell"/>
</dbReference>
<dbReference type="GO" id="GO:0003942">
    <property type="term" value="F:N-acetyl-gamma-glutamyl-phosphate reductase activity"/>
    <property type="evidence" value="ECO:0007669"/>
    <property type="project" value="UniProtKB-EC"/>
</dbReference>
<dbReference type="GO" id="GO:0051287">
    <property type="term" value="F:NAD binding"/>
    <property type="evidence" value="ECO:0007669"/>
    <property type="project" value="InterPro"/>
</dbReference>
<dbReference type="GO" id="GO:0070401">
    <property type="term" value="F:NADP+ binding"/>
    <property type="evidence" value="ECO:0007669"/>
    <property type="project" value="InterPro"/>
</dbReference>
<dbReference type="GO" id="GO:0006526">
    <property type="term" value="P:L-arginine biosynthetic process"/>
    <property type="evidence" value="ECO:0007669"/>
    <property type="project" value="UniProtKB-UniPathway"/>
</dbReference>
<dbReference type="CDD" id="cd23934">
    <property type="entry name" value="AGPR_1_C"/>
    <property type="match status" value="1"/>
</dbReference>
<dbReference type="CDD" id="cd17895">
    <property type="entry name" value="AGPR_1_N"/>
    <property type="match status" value="1"/>
</dbReference>
<dbReference type="FunFam" id="3.30.360.10:FF:000014">
    <property type="entry name" value="N-acetyl-gamma-glutamyl-phosphate reductase"/>
    <property type="match status" value="1"/>
</dbReference>
<dbReference type="Gene3D" id="3.30.360.10">
    <property type="entry name" value="Dihydrodipicolinate Reductase, domain 2"/>
    <property type="match status" value="1"/>
</dbReference>
<dbReference type="Gene3D" id="3.40.50.720">
    <property type="entry name" value="NAD(P)-binding Rossmann-like Domain"/>
    <property type="match status" value="1"/>
</dbReference>
<dbReference type="HAMAP" id="MF_00150">
    <property type="entry name" value="ArgC_type1"/>
    <property type="match status" value="1"/>
</dbReference>
<dbReference type="InterPro" id="IPR023013">
    <property type="entry name" value="AGPR_AS"/>
</dbReference>
<dbReference type="InterPro" id="IPR000706">
    <property type="entry name" value="AGPR_type-1"/>
</dbReference>
<dbReference type="InterPro" id="IPR036291">
    <property type="entry name" value="NAD(P)-bd_dom_sf"/>
</dbReference>
<dbReference type="InterPro" id="IPR050085">
    <property type="entry name" value="NAGSA_dehydrogenase"/>
</dbReference>
<dbReference type="InterPro" id="IPR000534">
    <property type="entry name" value="Semialdehyde_DH_NAD-bd"/>
</dbReference>
<dbReference type="NCBIfam" id="TIGR01850">
    <property type="entry name" value="argC"/>
    <property type="match status" value="1"/>
</dbReference>
<dbReference type="PANTHER" id="PTHR32338:SF10">
    <property type="entry name" value="N-ACETYL-GAMMA-GLUTAMYL-PHOSPHATE REDUCTASE, CHLOROPLASTIC-RELATED"/>
    <property type="match status" value="1"/>
</dbReference>
<dbReference type="PANTHER" id="PTHR32338">
    <property type="entry name" value="N-ACETYL-GAMMA-GLUTAMYL-PHOSPHATE REDUCTASE, CHLOROPLASTIC-RELATED-RELATED"/>
    <property type="match status" value="1"/>
</dbReference>
<dbReference type="Pfam" id="PF01118">
    <property type="entry name" value="Semialdhyde_dh"/>
    <property type="match status" value="1"/>
</dbReference>
<dbReference type="Pfam" id="PF22698">
    <property type="entry name" value="Semialdhyde_dhC_1"/>
    <property type="match status" value="1"/>
</dbReference>
<dbReference type="SMART" id="SM00859">
    <property type="entry name" value="Semialdhyde_dh"/>
    <property type="match status" value="1"/>
</dbReference>
<dbReference type="SUPFAM" id="SSF55347">
    <property type="entry name" value="Glyceraldehyde-3-phosphate dehydrogenase-like, C-terminal domain"/>
    <property type="match status" value="1"/>
</dbReference>
<dbReference type="SUPFAM" id="SSF51735">
    <property type="entry name" value="NAD(P)-binding Rossmann-fold domains"/>
    <property type="match status" value="1"/>
</dbReference>
<dbReference type="PROSITE" id="PS01224">
    <property type="entry name" value="ARGC"/>
    <property type="match status" value="1"/>
</dbReference>
<accession>Q6AV34</accession>
<accession>Q10GQ5</accession>
<protein>
    <recommendedName>
        <fullName>Probable N-acetyl-gamma-glutamyl-phosphate reductase, chloroplastic</fullName>
        <shortName>AGPR</shortName>
        <ecNumber>1.2.1.38</ecNumber>
    </recommendedName>
    <alternativeName>
        <fullName>N-acetyl-glutamate semialdehyde dehydrogenase</fullName>
        <shortName>NAGSA dehydrogenase</shortName>
    </alternativeName>
</protein>
<sequence>MGSTALGGGAPARLGLAPKDGVFGSNLKQCGGFMLKTTPKVGSSSVRVRASVASSPQKQHSPKTSGVKSGEEVRIAVLGASGYTGAEIVRLLANHPQFRIKVMTADRKAGEQFGSVFPHLITQDLPNLVAVKDADFSNVDAVFCCLPHGTTQEIIKGLPQELKIVDLSADFRLRDINEYAEWYGHSHRAPELQQEAVYGLTEVLRNEIRNARLVANPGCYPTSIQLPLVPLIKAKLIKVSNIIIDAKSGVSGAGRGAKEANLYTEIAEGIHAYGIKGHRHVPEIEQGLSEAAESKVTISFTPNLICMKRGMQSTMFVEMAPGVTANDLYQHLKSTYEGEEFVKLLNGSSVPHTRHVVGSNYCFMNVFEDRIPGRAIIISVIDNLVKGASGQAVQNLNLMMGLPENTGLQYQPLFP</sequence>
<reference key="1">
    <citation type="journal article" date="2005" name="Genome Res.">
        <title>Sequence, annotation, and analysis of synteny between rice chromosome 3 and diverged grass species.</title>
        <authorList>
            <consortium name="The rice chromosome 3 sequencing consortium"/>
            <person name="Buell C.R."/>
            <person name="Yuan Q."/>
            <person name="Ouyang S."/>
            <person name="Liu J."/>
            <person name="Zhu W."/>
            <person name="Wang A."/>
            <person name="Maiti R."/>
            <person name="Haas B."/>
            <person name="Wortman J."/>
            <person name="Pertea M."/>
            <person name="Jones K.M."/>
            <person name="Kim M."/>
            <person name="Overton L."/>
            <person name="Tsitrin T."/>
            <person name="Fadrosh D."/>
            <person name="Bera J."/>
            <person name="Weaver B."/>
            <person name="Jin S."/>
            <person name="Johri S."/>
            <person name="Reardon M."/>
            <person name="Webb K."/>
            <person name="Hill J."/>
            <person name="Moffat K."/>
            <person name="Tallon L."/>
            <person name="Van Aken S."/>
            <person name="Lewis M."/>
            <person name="Utterback T."/>
            <person name="Feldblyum T."/>
            <person name="Zismann V."/>
            <person name="Iobst S."/>
            <person name="Hsiao J."/>
            <person name="de Vazeille A.R."/>
            <person name="Salzberg S.L."/>
            <person name="White O."/>
            <person name="Fraser C.M."/>
            <person name="Yu Y."/>
            <person name="Kim H."/>
            <person name="Rambo T."/>
            <person name="Currie J."/>
            <person name="Collura K."/>
            <person name="Kernodle-Thompson S."/>
            <person name="Wei F."/>
            <person name="Kudrna K."/>
            <person name="Ammiraju J.S.S."/>
            <person name="Luo M."/>
            <person name="Goicoechea J.L."/>
            <person name="Wing R.A."/>
            <person name="Henry D."/>
            <person name="Oates R."/>
            <person name="Palmer M."/>
            <person name="Pries G."/>
            <person name="Saski C."/>
            <person name="Simmons J."/>
            <person name="Soderlund C."/>
            <person name="Nelson W."/>
            <person name="de la Bastide M."/>
            <person name="Spiegel L."/>
            <person name="Nascimento L."/>
            <person name="Huang E."/>
            <person name="Preston R."/>
            <person name="Zutavern T."/>
            <person name="Palmer L."/>
            <person name="O'Shaughnessy A."/>
            <person name="Dike S."/>
            <person name="McCombie W.R."/>
            <person name="Minx P."/>
            <person name="Cordum H."/>
            <person name="Wilson R."/>
            <person name="Jin W."/>
            <person name="Lee H.R."/>
            <person name="Jiang J."/>
            <person name="Jackson S."/>
        </authorList>
    </citation>
    <scope>NUCLEOTIDE SEQUENCE [LARGE SCALE GENOMIC DNA]</scope>
    <source>
        <strain>cv. Nipponbare</strain>
    </source>
</reference>
<reference key="2">
    <citation type="journal article" date="2005" name="Nature">
        <title>The map-based sequence of the rice genome.</title>
        <authorList>
            <consortium name="International rice genome sequencing project (IRGSP)"/>
        </authorList>
    </citation>
    <scope>NUCLEOTIDE SEQUENCE [LARGE SCALE GENOMIC DNA]</scope>
    <source>
        <strain>cv. Nipponbare</strain>
    </source>
</reference>
<reference key="3">
    <citation type="journal article" date="2008" name="Nucleic Acids Res.">
        <title>The rice annotation project database (RAP-DB): 2008 update.</title>
        <authorList>
            <consortium name="The rice annotation project (RAP)"/>
        </authorList>
    </citation>
    <scope>GENOME REANNOTATION</scope>
    <source>
        <strain>cv. Nipponbare</strain>
    </source>
</reference>
<reference key="4">
    <citation type="journal article" date="2013" name="Rice">
        <title>Improvement of the Oryza sativa Nipponbare reference genome using next generation sequence and optical map data.</title>
        <authorList>
            <person name="Kawahara Y."/>
            <person name="de la Bastide M."/>
            <person name="Hamilton J.P."/>
            <person name="Kanamori H."/>
            <person name="McCombie W.R."/>
            <person name="Ouyang S."/>
            <person name="Schwartz D.C."/>
            <person name="Tanaka T."/>
            <person name="Wu J."/>
            <person name="Zhou S."/>
            <person name="Childs K.L."/>
            <person name="Davidson R.M."/>
            <person name="Lin H."/>
            <person name="Quesada-Ocampo L."/>
            <person name="Vaillancourt B."/>
            <person name="Sakai H."/>
            <person name="Lee S.S."/>
            <person name="Kim J."/>
            <person name="Numa H."/>
            <person name="Itoh T."/>
            <person name="Buell C.R."/>
            <person name="Matsumoto T."/>
        </authorList>
    </citation>
    <scope>GENOME REANNOTATION</scope>
    <source>
        <strain>cv. Nipponbare</strain>
    </source>
</reference>
<reference key="5">
    <citation type="journal article" date="2003" name="Science">
        <title>Collection, mapping, and annotation of over 28,000 cDNA clones from japonica rice.</title>
        <authorList>
            <consortium name="The rice full-length cDNA consortium"/>
        </authorList>
    </citation>
    <scope>NUCLEOTIDE SEQUENCE [LARGE SCALE MRNA]</scope>
    <source>
        <strain>cv. Nipponbare</strain>
    </source>
</reference>
<reference key="6">
    <citation type="journal article" date="2005" name="Proteins">
        <title>Crystal structure of putative N-acetyl-gamma-glutamyl-phosphate reductase (AK071544) from rice (Oryza sativa).</title>
        <authorList>
            <person name="Nonaka T."/>
            <person name="Kita A."/>
            <person name="Miura-Ohnuma J."/>
            <person name="Katoh E."/>
            <person name="Inagaki N."/>
            <person name="Yamazaki T."/>
            <person name="Miki K."/>
        </authorList>
    </citation>
    <scope>X-RAY CRYSTALLOGRAPHY (2.2 ANGSTROMS) OF 50-415</scope>
    <scope>SUBUNIT</scope>
</reference>